<dbReference type="EC" id="2.7.11.1"/>
<dbReference type="EMBL" id="L22013">
    <property type="protein sequence ID" value="AAC37851.1"/>
    <property type="molecule type" value="Genomic_DNA"/>
</dbReference>
<dbReference type="KEGG" id="vg:932408"/>
<dbReference type="GO" id="GO:0044165">
    <property type="term" value="C:host cell endoplasmic reticulum"/>
    <property type="evidence" value="ECO:0007669"/>
    <property type="project" value="UniProtKB-SubCell"/>
</dbReference>
<dbReference type="GO" id="GO:0044172">
    <property type="term" value="C:host cell endoplasmic reticulum-Golgi intermediate compartment"/>
    <property type="evidence" value="ECO:0007669"/>
    <property type="project" value="UniProtKB-SubCell"/>
</dbReference>
<dbReference type="GO" id="GO:0005524">
    <property type="term" value="F:ATP binding"/>
    <property type="evidence" value="ECO:0007669"/>
    <property type="project" value="UniProtKB-KW"/>
</dbReference>
<dbReference type="GO" id="GO:0106310">
    <property type="term" value="F:protein serine kinase activity"/>
    <property type="evidence" value="ECO:0007669"/>
    <property type="project" value="RHEA"/>
</dbReference>
<dbReference type="GO" id="GO:0004674">
    <property type="term" value="F:protein serine/threonine kinase activity"/>
    <property type="evidence" value="ECO:0007669"/>
    <property type="project" value="UniProtKB-KW"/>
</dbReference>
<dbReference type="InterPro" id="IPR008790">
    <property type="entry name" value="Poxvirus_ser/thr_kinase"/>
</dbReference>
<dbReference type="InterPro" id="IPR008271">
    <property type="entry name" value="Ser/Thr_kinase_AS"/>
</dbReference>
<dbReference type="Pfam" id="PF05445">
    <property type="entry name" value="Pox_ser-thr_kin"/>
    <property type="match status" value="1"/>
</dbReference>
<dbReference type="PIRSF" id="PIRSF015695">
    <property type="entry name" value="STPK_F10L"/>
    <property type="match status" value="1"/>
</dbReference>
<dbReference type="PROSITE" id="PS00108">
    <property type="entry name" value="PROTEIN_KINASE_ST"/>
    <property type="match status" value="1"/>
</dbReference>
<evidence type="ECO:0000250" key="1"/>
<evidence type="ECO:0000250" key="2">
    <source>
        <dbReference type="UniProtKB" id="Q89121"/>
    </source>
</evidence>
<evidence type="ECO:0000255" key="3">
    <source>
        <dbReference type="PROSITE-ProRule" id="PRU10027"/>
    </source>
</evidence>
<evidence type="ECO:0000305" key="4"/>
<organismHost>
    <name type="scientific">Sus scrofa</name>
    <name type="common">Pig</name>
    <dbReference type="NCBI Taxonomy" id="9823"/>
</organismHost>
<sequence>MKEINSLECQWESIDDNNDTTILGDDIYFDYIISQLDIHQNWSPDIRLIRYFRKFNKESFDKISDTEYINPSFFQQRDKRFYPLNDDFYHISTGGYGIVFKMDKYVVKFVYEPNKQYSPIDTTAEYTIPKFLYNNLKGDEKKLIVCAWAMGLNYKLTFLHRLYKRVLYMLLLIIQTIDNQRLNIHHFSHKYFLKSFNEKKSDIKFVKLLSYFYPIVVQSNINVINYFTHMFHFFEHEKRANYLYDRGNIIIFPLARFSSDKVTEQMAIELGFKSIVQYVKFIFLQISLLYIKIYELPCCDNFLHVDLKPDNILIFNSDCPITIKFKKYTYVFNEPIKACLNDFDFSQVANILNKKIKNSLKIEHNWYYDFHFFIHTLLRTYPEIESDKEFSDSLEDFIMCCTKNTCEKFRLKVSILHPISFLENLITKNIFSNWINGESC</sequence>
<reference key="1">
    <citation type="journal article" date="1993" name="Virology">
        <title>DNA sequence analysis of conserved and unique regions of swinepox virus: identification of genetic elements supporting phenotypic observations including a novel G protein-coupled receptor homologue.</title>
        <authorList>
            <person name="Massung R.F."/>
            <person name="Jayarama V."/>
            <person name="Moyer R.W."/>
        </authorList>
    </citation>
    <scope>NUCLEOTIDE SEQUENCE [GENOMIC DNA]</scope>
</reference>
<keyword id="KW-0067">ATP-binding</keyword>
<keyword id="KW-1038">Host endoplasmic reticulum</keyword>
<keyword id="KW-0418">Kinase</keyword>
<keyword id="KW-0426">Late protein</keyword>
<keyword id="KW-0547">Nucleotide-binding</keyword>
<keyword id="KW-0597">Phosphoprotein</keyword>
<keyword id="KW-0723">Serine/threonine-protein kinase</keyword>
<keyword id="KW-0808">Transferase</keyword>
<comment type="function">
    <text evidence="2">Essential serine-protein kinase involved in the early stage of virion morphogenesis.</text>
</comment>
<comment type="catalytic activity">
    <reaction>
        <text>L-seryl-[protein] + ATP = O-phospho-L-seryl-[protein] + ADP + H(+)</text>
        <dbReference type="Rhea" id="RHEA:17989"/>
        <dbReference type="Rhea" id="RHEA-COMP:9863"/>
        <dbReference type="Rhea" id="RHEA-COMP:11604"/>
        <dbReference type="ChEBI" id="CHEBI:15378"/>
        <dbReference type="ChEBI" id="CHEBI:29999"/>
        <dbReference type="ChEBI" id="CHEBI:30616"/>
        <dbReference type="ChEBI" id="CHEBI:83421"/>
        <dbReference type="ChEBI" id="CHEBI:456216"/>
        <dbReference type="EC" id="2.7.11.1"/>
    </reaction>
</comment>
<comment type="catalytic activity">
    <reaction>
        <text>L-threonyl-[protein] + ATP = O-phospho-L-threonyl-[protein] + ADP + H(+)</text>
        <dbReference type="Rhea" id="RHEA:46608"/>
        <dbReference type="Rhea" id="RHEA-COMP:11060"/>
        <dbReference type="Rhea" id="RHEA-COMP:11605"/>
        <dbReference type="ChEBI" id="CHEBI:15378"/>
        <dbReference type="ChEBI" id="CHEBI:30013"/>
        <dbReference type="ChEBI" id="CHEBI:30616"/>
        <dbReference type="ChEBI" id="CHEBI:61977"/>
        <dbReference type="ChEBI" id="CHEBI:456216"/>
        <dbReference type="EC" id="2.7.11.1"/>
    </reaction>
</comment>
<comment type="subcellular location">
    <subcellularLocation>
        <location evidence="2">Host endoplasmic reticulum</location>
    </subcellularLocation>
    <subcellularLocation>
        <location evidence="2">Host endoplasmic reticulum-Golgi intermediate compartment</location>
    </subcellularLocation>
</comment>
<comment type="PTM">
    <text evidence="2">Phosphorylated in vivo. Autophosphorylated in vitro.</text>
</comment>
<comment type="similarity">
    <text evidence="4">Belongs to the protein kinase superfamily. Ser/Thr protein kinase family. Poxviruses subfamily.</text>
</comment>
<accession>P32216</accession>
<gene>
    <name type="primary">OPG054</name>
    <name type="ORF">C20L</name>
</gene>
<name>VPK2_SWPVK</name>
<proteinExistence type="inferred from homology"/>
<feature type="chain" id="PRO_0000086794" description="Serine/threonine-protein kinase 2">
    <location>
        <begin position="1"/>
        <end position="440"/>
    </location>
</feature>
<feature type="domain" description="Protein kinase">
    <location>
        <begin position="85"/>
        <end position="440"/>
    </location>
</feature>
<feature type="active site" description="Proton acceptor" evidence="3">
    <location>
        <position position="306"/>
    </location>
</feature>
<feature type="binding site" evidence="1">
    <location>
        <begin position="91"/>
        <end position="99"/>
    </location>
    <ligand>
        <name>ATP</name>
        <dbReference type="ChEBI" id="CHEBI:30616"/>
    </ligand>
</feature>
<feature type="binding site" evidence="1">
    <location>
        <position position="115"/>
    </location>
    <ligand>
        <name>ATP</name>
        <dbReference type="ChEBI" id="CHEBI:30616"/>
    </ligand>
</feature>
<organism>
    <name type="scientific">Swinepox virus (strain Kasza)</name>
    <name type="common">SWPV</name>
    <dbReference type="NCBI Taxonomy" id="10277"/>
    <lineage>
        <taxon>Viruses</taxon>
        <taxon>Varidnaviria</taxon>
        <taxon>Bamfordvirae</taxon>
        <taxon>Nucleocytoviricota</taxon>
        <taxon>Pokkesviricetes</taxon>
        <taxon>Chitovirales</taxon>
        <taxon>Poxviridae</taxon>
        <taxon>Chordopoxvirinae</taxon>
        <taxon>Suipoxvirus</taxon>
        <taxon>Swinepox virus</taxon>
    </lineage>
</organism>
<protein>
    <recommendedName>
        <fullName>Serine/threonine-protein kinase 2</fullName>
        <ecNumber>2.7.11.1</ecNumber>
    </recommendedName>
</protein>